<evidence type="ECO:0000255" key="1">
    <source>
        <dbReference type="HAMAP-Rule" id="MF_00222"/>
    </source>
</evidence>
<keyword id="KW-0028">Amino-acid biosynthesis</keyword>
<keyword id="KW-0057">Aromatic amino acid biosynthesis</keyword>
<keyword id="KW-0521">NADP</keyword>
<keyword id="KW-0560">Oxidoreductase</keyword>
<dbReference type="EC" id="1.1.1.25" evidence="1"/>
<dbReference type="EMBL" id="CP000970">
    <property type="protein sequence ID" value="ACB18433.1"/>
    <property type="molecule type" value="Genomic_DNA"/>
</dbReference>
<dbReference type="RefSeq" id="WP_000451244.1">
    <property type="nucleotide sequence ID" value="NC_010498.1"/>
</dbReference>
<dbReference type="SMR" id="B1LGN8"/>
<dbReference type="KEGG" id="ecm:EcSMS35_3577"/>
<dbReference type="HOGENOM" id="CLU_044063_2_1_6"/>
<dbReference type="UniPathway" id="UPA00053">
    <property type="reaction ID" value="UER00087"/>
</dbReference>
<dbReference type="Proteomes" id="UP000007011">
    <property type="component" value="Chromosome"/>
</dbReference>
<dbReference type="GO" id="GO:0005829">
    <property type="term" value="C:cytosol"/>
    <property type="evidence" value="ECO:0007669"/>
    <property type="project" value="TreeGrafter"/>
</dbReference>
<dbReference type="GO" id="GO:0050661">
    <property type="term" value="F:NADP binding"/>
    <property type="evidence" value="ECO:0007669"/>
    <property type="project" value="InterPro"/>
</dbReference>
<dbReference type="GO" id="GO:0004764">
    <property type="term" value="F:shikimate 3-dehydrogenase (NADP+) activity"/>
    <property type="evidence" value="ECO:0007669"/>
    <property type="project" value="UniProtKB-UniRule"/>
</dbReference>
<dbReference type="GO" id="GO:0008652">
    <property type="term" value="P:amino acid biosynthetic process"/>
    <property type="evidence" value="ECO:0007669"/>
    <property type="project" value="UniProtKB-KW"/>
</dbReference>
<dbReference type="GO" id="GO:0009073">
    <property type="term" value="P:aromatic amino acid family biosynthetic process"/>
    <property type="evidence" value="ECO:0007669"/>
    <property type="project" value="UniProtKB-KW"/>
</dbReference>
<dbReference type="GO" id="GO:0009423">
    <property type="term" value="P:chorismate biosynthetic process"/>
    <property type="evidence" value="ECO:0007669"/>
    <property type="project" value="UniProtKB-UniRule"/>
</dbReference>
<dbReference type="GO" id="GO:0019632">
    <property type="term" value="P:shikimate metabolic process"/>
    <property type="evidence" value="ECO:0007669"/>
    <property type="project" value="InterPro"/>
</dbReference>
<dbReference type="CDD" id="cd01065">
    <property type="entry name" value="NAD_bind_Shikimate_DH"/>
    <property type="match status" value="1"/>
</dbReference>
<dbReference type="FunFam" id="3.40.50.10860:FF:000006">
    <property type="entry name" value="Shikimate dehydrogenase (NADP(+))"/>
    <property type="match status" value="1"/>
</dbReference>
<dbReference type="FunFam" id="3.40.50.720:FF:000104">
    <property type="entry name" value="Shikimate dehydrogenase (NADP(+))"/>
    <property type="match status" value="1"/>
</dbReference>
<dbReference type="Gene3D" id="3.40.50.10860">
    <property type="entry name" value="Leucine Dehydrogenase, chain A, domain 1"/>
    <property type="match status" value="1"/>
</dbReference>
<dbReference type="Gene3D" id="3.40.50.720">
    <property type="entry name" value="NAD(P)-binding Rossmann-like Domain"/>
    <property type="match status" value="1"/>
</dbReference>
<dbReference type="HAMAP" id="MF_00222">
    <property type="entry name" value="Shikimate_DH_AroE"/>
    <property type="match status" value="1"/>
</dbReference>
<dbReference type="InterPro" id="IPR046346">
    <property type="entry name" value="Aminoacid_DH-like_N_sf"/>
</dbReference>
<dbReference type="InterPro" id="IPR036291">
    <property type="entry name" value="NAD(P)-bd_dom_sf"/>
</dbReference>
<dbReference type="InterPro" id="IPR041121">
    <property type="entry name" value="SDH_C"/>
</dbReference>
<dbReference type="InterPro" id="IPR011342">
    <property type="entry name" value="Shikimate_DH"/>
</dbReference>
<dbReference type="InterPro" id="IPR013708">
    <property type="entry name" value="Shikimate_DH-bd_N"/>
</dbReference>
<dbReference type="InterPro" id="IPR022893">
    <property type="entry name" value="Shikimate_DH_fam"/>
</dbReference>
<dbReference type="InterPro" id="IPR006151">
    <property type="entry name" value="Shikm_DH/Glu-tRNA_Rdtase"/>
</dbReference>
<dbReference type="NCBIfam" id="TIGR00507">
    <property type="entry name" value="aroE"/>
    <property type="match status" value="1"/>
</dbReference>
<dbReference type="NCBIfam" id="NF001310">
    <property type="entry name" value="PRK00258.1-2"/>
    <property type="match status" value="1"/>
</dbReference>
<dbReference type="PANTHER" id="PTHR21089:SF1">
    <property type="entry name" value="BIFUNCTIONAL 3-DEHYDROQUINATE DEHYDRATASE_SHIKIMATE DEHYDROGENASE, CHLOROPLASTIC"/>
    <property type="match status" value="1"/>
</dbReference>
<dbReference type="PANTHER" id="PTHR21089">
    <property type="entry name" value="SHIKIMATE DEHYDROGENASE"/>
    <property type="match status" value="1"/>
</dbReference>
<dbReference type="Pfam" id="PF18317">
    <property type="entry name" value="SDH_C"/>
    <property type="match status" value="1"/>
</dbReference>
<dbReference type="Pfam" id="PF01488">
    <property type="entry name" value="Shikimate_DH"/>
    <property type="match status" value="1"/>
</dbReference>
<dbReference type="Pfam" id="PF08501">
    <property type="entry name" value="Shikimate_dh_N"/>
    <property type="match status" value="1"/>
</dbReference>
<dbReference type="SUPFAM" id="SSF53223">
    <property type="entry name" value="Aminoacid dehydrogenase-like, N-terminal domain"/>
    <property type="match status" value="1"/>
</dbReference>
<dbReference type="SUPFAM" id="SSF51735">
    <property type="entry name" value="NAD(P)-binding Rossmann-fold domains"/>
    <property type="match status" value="1"/>
</dbReference>
<sequence>METYAVFGNPIAHSKSPFIHQQFAQQLNIEHPYGRVLAPINDFINTLNAFFSAGGKGANVTVPFKEEAFARADELTERATLAGAVNTLKRLEDGRLLGDNTDGIGLLSDLERLSFIRPGLRILLIGAGGASRGVLLPLLSLDCAVTITNRTVSRAEELAKLFAHTGSIHALGMDELEGHEFDLIINATSSGISGDIPAIPASLIHSGMCCYDMFYQKGKTPFLAWCELRGSKRNADGLGMLVAQAAHAFLLWHGVLPDIEPVIKQLQEELSA</sequence>
<comment type="function">
    <text evidence="1">Involved in the biosynthesis of the chorismate, which leads to the biosynthesis of aromatic amino acids. Catalyzes the reversible NADPH linked reduction of 3-dehydroshikimate (DHSA) to yield shikimate (SA).</text>
</comment>
<comment type="catalytic activity">
    <reaction evidence="1">
        <text>shikimate + NADP(+) = 3-dehydroshikimate + NADPH + H(+)</text>
        <dbReference type="Rhea" id="RHEA:17737"/>
        <dbReference type="ChEBI" id="CHEBI:15378"/>
        <dbReference type="ChEBI" id="CHEBI:16630"/>
        <dbReference type="ChEBI" id="CHEBI:36208"/>
        <dbReference type="ChEBI" id="CHEBI:57783"/>
        <dbReference type="ChEBI" id="CHEBI:58349"/>
        <dbReference type="EC" id="1.1.1.25"/>
    </reaction>
</comment>
<comment type="pathway">
    <text evidence="1">Metabolic intermediate biosynthesis; chorismate biosynthesis; chorismate from D-erythrose 4-phosphate and phosphoenolpyruvate: step 4/7.</text>
</comment>
<comment type="subunit">
    <text evidence="1">Homodimer.</text>
</comment>
<comment type="similarity">
    <text evidence="1">Belongs to the shikimate dehydrogenase family.</text>
</comment>
<accession>B1LGN8</accession>
<organism>
    <name type="scientific">Escherichia coli (strain SMS-3-5 / SECEC)</name>
    <dbReference type="NCBI Taxonomy" id="439855"/>
    <lineage>
        <taxon>Bacteria</taxon>
        <taxon>Pseudomonadati</taxon>
        <taxon>Pseudomonadota</taxon>
        <taxon>Gammaproteobacteria</taxon>
        <taxon>Enterobacterales</taxon>
        <taxon>Enterobacteriaceae</taxon>
        <taxon>Escherichia</taxon>
    </lineage>
</organism>
<reference key="1">
    <citation type="journal article" date="2008" name="J. Bacteriol.">
        <title>Insights into the environmental resistance gene pool from the genome sequence of the multidrug-resistant environmental isolate Escherichia coli SMS-3-5.</title>
        <authorList>
            <person name="Fricke W.F."/>
            <person name="Wright M.S."/>
            <person name="Lindell A.H."/>
            <person name="Harkins D.M."/>
            <person name="Baker-Austin C."/>
            <person name="Ravel J."/>
            <person name="Stepanauskas R."/>
        </authorList>
    </citation>
    <scope>NUCLEOTIDE SEQUENCE [LARGE SCALE GENOMIC DNA]</scope>
    <source>
        <strain>SMS-3-5 / SECEC</strain>
    </source>
</reference>
<proteinExistence type="inferred from homology"/>
<protein>
    <recommendedName>
        <fullName evidence="1">Shikimate dehydrogenase (NADP(+))</fullName>
        <shortName evidence="1">SDH</shortName>
        <ecNumber evidence="1">1.1.1.25</ecNumber>
    </recommendedName>
</protein>
<gene>
    <name evidence="1" type="primary">aroE</name>
    <name type="ordered locus">EcSMS35_3577</name>
</gene>
<name>AROE_ECOSM</name>
<feature type="chain" id="PRO_1000118878" description="Shikimate dehydrogenase (NADP(+))">
    <location>
        <begin position="1"/>
        <end position="272"/>
    </location>
</feature>
<feature type="active site" description="Proton acceptor" evidence="1">
    <location>
        <position position="65"/>
    </location>
</feature>
<feature type="binding site" evidence="1">
    <location>
        <begin position="14"/>
        <end position="16"/>
    </location>
    <ligand>
        <name>shikimate</name>
        <dbReference type="ChEBI" id="CHEBI:36208"/>
    </ligand>
</feature>
<feature type="binding site" evidence="1">
    <location>
        <position position="61"/>
    </location>
    <ligand>
        <name>shikimate</name>
        <dbReference type="ChEBI" id="CHEBI:36208"/>
    </ligand>
</feature>
<feature type="binding site" evidence="1">
    <location>
        <position position="77"/>
    </location>
    <ligand>
        <name>NADP(+)</name>
        <dbReference type="ChEBI" id="CHEBI:58349"/>
    </ligand>
</feature>
<feature type="binding site" evidence="1">
    <location>
        <position position="86"/>
    </location>
    <ligand>
        <name>shikimate</name>
        <dbReference type="ChEBI" id="CHEBI:36208"/>
    </ligand>
</feature>
<feature type="binding site" evidence="1">
    <location>
        <position position="102"/>
    </location>
    <ligand>
        <name>shikimate</name>
        <dbReference type="ChEBI" id="CHEBI:36208"/>
    </ligand>
</feature>
<feature type="binding site" evidence="1">
    <location>
        <begin position="126"/>
        <end position="130"/>
    </location>
    <ligand>
        <name>NADP(+)</name>
        <dbReference type="ChEBI" id="CHEBI:58349"/>
    </ligand>
</feature>
<feature type="binding site" evidence="1">
    <location>
        <begin position="149"/>
        <end position="154"/>
    </location>
    <ligand>
        <name>NADP(+)</name>
        <dbReference type="ChEBI" id="CHEBI:58349"/>
    </ligand>
</feature>
<feature type="binding site" evidence="1">
    <location>
        <position position="213"/>
    </location>
    <ligand>
        <name>NADP(+)</name>
        <dbReference type="ChEBI" id="CHEBI:58349"/>
    </ligand>
</feature>
<feature type="binding site" evidence="1">
    <location>
        <position position="215"/>
    </location>
    <ligand>
        <name>shikimate</name>
        <dbReference type="ChEBI" id="CHEBI:36208"/>
    </ligand>
</feature>
<feature type="binding site" evidence="1">
    <location>
        <position position="237"/>
    </location>
    <ligand>
        <name>NADP(+)</name>
        <dbReference type="ChEBI" id="CHEBI:58349"/>
    </ligand>
</feature>